<keyword id="KW-0067">ATP-binding</keyword>
<keyword id="KW-0963">Cytoplasm</keyword>
<keyword id="KW-0315">Glutamine amidotransferase</keyword>
<keyword id="KW-0378">Hydrolase</keyword>
<keyword id="KW-0436">Ligase</keyword>
<keyword id="KW-0547">Nucleotide-binding</keyword>
<keyword id="KW-0658">Purine biosynthesis</keyword>
<keyword id="KW-1185">Reference proteome</keyword>
<reference key="1">
    <citation type="journal article" date="2005" name="Proc. Natl. Acad. Sci. U.S.A.">
        <title>The genome of Salinibacter ruber: convergence and gene exchange among hyperhalophilic bacteria and archaea.</title>
        <authorList>
            <person name="Mongodin E.F."/>
            <person name="Nelson K.E."/>
            <person name="Daugherty S."/>
            <person name="DeBoy R.T."/>
            <person name="Wister J."/>
            <person name="Khouri H."/>
            <person name="Weidman J."/>
            <person name="Walsh D.A."/>
            <person name="Papke R.T."/>
            <person name="Sanchez Perez G."/>
            <person name="Sharma A.K."/>
            <person name="Nesbo C.L."/>
            <person name="MacLeod D."/>
            <person name="Bapteste E."/>
            <person name="Doolittle W.F."/>
            <person name="Charlebois R.L."/>
            <person name="Legault B."/>
            <person name="Rodriguez-Valera F."/>
        </authorList>
    </citation>
    <scope>NUCLEOTIDE SEQUENCE [LARGE SCALE GENOMIC DNA]</scope>
    <source>
        <strain>DSM 13855 / CECT 5946 / M31</strain>
    </source>
</reference>
<proteinExistence type="inferred from homology"/>
<dbReference type="EC" id="6.3.5.3" evidence="1"/>
<dbReference type="EC" id="3.5.1.2" evidence="1"/>
<dbReference type="EMBL" id="CP000159">
    <property type="protein sequence ID" value="ABC43823.1"/>
    <property type="molecule type" value="Genomic_DNA"/>
</dbReference>
<dbReference type="RefSeq" id="WP_011403297.1">
    <property type="nucleotide sequence ID" value="NC_007677.1"/>
</dbReference>
<dbReference type="RefSeq" id="YP_444664.1">
    <property type="nucleotide sequence ID" value="NC_007677.1"/>
</dbReference>
<dbReference type="SMR" id="Q2S567"/>
<dbReference type="STRING" id="309807.SRU_0521"/>
<dbReference type="EnsemblBacteria" id="ABC43823">
    <property type="protein sequence ID" value="ABC43823"/>
    <property type="gene ID" value="SRU_0521"/>
</dbReference>
<dbReference type="KEGG" id="sru:SRU_0521"/>
<dbReference type="PATRIC" id="fig|309807.25.peg.543"/>
<dbReference type="eggNOG" id="COG0047">
    <property type="taxonomic scope" value="Bacteria"/>
</dbReference>
<dbReference type="HOGENOM" id="CLU_001031_3_1_10"/>
<dbReference type="OrthoDB" id="9804441at2"/>
<dbReference type="UniPathway" id="UPA00074">
    <property type="reaction ID" value="UER00128"/>
</dbReference>
<dbReference type="Proteomes" id="UP000008674">
    <property type="component" value="Chromosome"/>
</dbReference>
<dbReference type="GO" id="GO:0005737">
    <property type="term" value="C:cytoplasm"/>
    <property type="evidence" value="ECO:0007669"/>
    <property type="project" value="UniProtKB-SubCell"/>
</dbReference>
<dbReference type="GO" id="GO:0005524">
    <property type="term" value="F:ATP binding"/>
    <property type="evidence" value="ECO:0007669"/>
    <property type="project" value="UniProtKB-KW"/>
</dbReference>
<dbReference type="GO" id="GO:0004359">
    <property type="term" value="F:glutaminase activity"/>
    <property type="evidence" value="ECO:0007669"/>
    <property type="project" value="UniProtKB-EC"/>
</dbReference>
<dbReference type="GO" id="GO:0004642">
    <property type="term" value="F:phosphoribosylformylglycinamidine synthase activity"/>
    <property type="evidence" value="ECO:0007669"/>
    <property type="project" value="UniProtKB-UniRule"/>
</dbReference>
<dbReference type="GO" id="GO:0006189">
    <property type="term" value="P:'de novo' IMP biosynthetic process"/>
    <property type="evidence" value="ECO:0007669"/>
    <property type="project" value="UniProtKB-UniRule"/>
</dbReference>
<dbReference type="CDD" id="cd01740">
    <property type="entry name" value="GATase1_FGAR_AT"/>
    <property type="match status" value="1"/>
</dbReference>
<dbReference type="Gene3D" id="3.40.50.880">
    <property type="match status" value="1"/>
</dbReference>
<dbReference type="HAMAP" id="MF_00421">
    <property type="entry name" value="PurQ"/>
    <property type="match status" value="1"/>
</dbReference>
<dbReference type="InterPro" id="IPR029062">
    <property type="entry name" value="Class_I_gatase-like"/>
</dbReference>
<dbReference type="InterPro" id="IPR010075">
    <property type="entry name" value="PRibForGlyAmidine_synth_PurQ"/>
</dbReference>
<dbReference type="NCBIfam" id="TIGR01737">
    <property type="entry name" value="FGAM_synth_I"/>
    <property type="match status" value="1"/>
</dbReference>
<dbReference type="NCBIfam" id="NF002957">
    <property type="entry name" value="PRK03619.1"/>
    <property type="match status" value="1"/>
</dbReference>
<dbReference type="PANTHER" id="PTHR47552">
    <property type="entry name" value="PHOSPHORIBOSYLFORMYLGLYCINAMIDINE SYNTHASE SUBUNIT PURQ"/>
    <property type="match status" value="1"/>
</dbReference>
<dbReference type="PANTHER" id="PTHR47552:SF1">
    <property type="entry name" value="PHOSPHORIBOSYLFORMYLGLYCINAMIDINE SYNTHASE SUBUNIT PURQ"/>
    <property type="match status" value="1"/>
</dbReference>
<dbReference type="Pfam" id="PF13507">
    <property type="entry name" value="GATase_5"/>
    <property type="match status" value="1"/>
</dbReference>
<dbReference type="PIRSF" id="PIRSF001586">
    <property type="entry name" value="FGAM_synth_I"/>
    <property type="match status" value="1"/>
</dbReference>
<dbReference type="SMART" id="SM01211">
    <property type="entry name" value="GATase_5"/>
    <property type="match status" value="1"/>
</dbReference>
<dbReference type="SUPFAM" id="SSF52317">
    <property type="entry name" value="Class I glutamine amidotransferase-like"/>
    <property type="match status" value="1"/>
</dbReference>
<dbReference type="PROSITE" id="PS51273">
    <property type="entry name" value="GATASE_TYPE_1"/>
    <property type="match status" value="1"/>
</dbReference>
<feature type="chain" id="PRO_0000252729" description="Phosphoribosylformylglycinamidine synthase subunit PurQ">
    <location>
        <begin position="1"/>
        <end position="235"/>
    </location>
</feature>
<feature type="domain" description="Glutamine amidotransferase type-1" evidence="1">
    <location>
        <begin position="5"/>
        <end position="235"/>
    </location>
</feature>
<feature type="active site" description="Nucleophile" evidence="1">
    <location>
        <position position="88"/>
    </location>
</feature>
<feature type="active site" evidence="1">
    <location>
        <position position="205"/>
    </location>
</feature>
<feature type="active site" evidence="1">
    <location>
        <position position="207"/>
    </location>
</feature>
<sequence>MSARFGVVVFPGSNCDHDAYHAAHDVFDQEARFIWHEEASLGDVDVVIVPGGFSYGDYLRSGAVARFSPIMQDVVRFAEDGGLVFGICNGFQVLCEAGLLPGTLMRNESLRFVCKDTPLRVENAGTPFTNALTEGQVITIPVSHGEGRYYADEDVLARIEANDQVLLRYSTADGAVTDEANPNGSVHGIAGLVNEAGNVCGLMPHPERCVESLLGGDDGRLIFESLLNHVSIVAA</sequence>
<protein>
    <recommendedName>
        <fullName evidence="1">Phosphoribosylformylglycinamidine synthase subunit PurQ</fullName>
        <shortName evidence="1">FGAM synthase</shortName>
        <ecNumber evidence="1">6.3.5.3</ecNumber>
    </recommendedName>
    <alternativeName>
        <fullName evidence="1">Formylglycinamide ribonucleotide amidotransferase subunit I</fullName>
        <shortName evidence="1">FGAR amidotransferase I</shortName>
        <shortName evidence="1">FGAR-AT I</shortName>
    </alternativeName>
    <alternativeName>
        <fullName evidence="1">Glutaminase PurQ</fullName>
        <ecNumber evidence="1">3.5.1.2</ecNumber>
    </alternativeName>
    <alternativeName>
        <fullName evidence="1">Phosphoribosylformylglycinamidine synthase subunit I</fullName>
    </alternativeName>
</protein>
<name>PURQ_SALRD</name>
<comment type="function">
    <text evidence="1">Part of the phosphoribosylformylglycinamidine synthase complex involved in the purines biosynthetic pathway. Catalyzes the ATP-dependent conversion of formylglycinamide ribonucleotide (FGAR) and glutamine to yield formylglycinamidine ribonucleotide (FGAM) and glutamate. The FGAM synthase complex is composed of three subunits. PurQ produces an ammonia molecule by converting glutamine to glutamate. PurL transfers the ammonia molecule to FGAR to form FGAM in an ATP-dependent manner. PurS interacts with PurQ and PurL and is thought to assist in the transfer of the ammonia molecule from PurQ to PurL.</text>
</comment>
<comment type="catalytic activity">
    <reaction evidence="1">
        <text>N(2)-formyl-N(1)-(5-phospho-beta-D-ribosyl)glycinamide + L-glutamine + ATP + H2O = 2-formamido-N(1)-(5-O-phospho-beta-D-ribosyl)acetamidine + L-glutamate + ADP + phosphate + H(+)</text>
        <dbReference type="Rhea" id="RHEA:17129"/>
        <dbReference type="ChEBI" id="CHEBI:15377"/>
        <dbReference type="ChEBI" id="CHEBI:15378"/>
        <dbReference type="ChEBI" id="CHEBI:29985"/>
        <dbReference type="ChEBI" id="CHEBI:30616"/>
        <dbReference type="ChEBI" id="CHEBI:43474"/>
        <dbReference type="ChEBI" id="CHEBI:58359"/>
        <dbReference type="ChEBI" id="CHEBI:147286"/>
        <dbReference type="ChEBI" id="CHEBI:147287"/>
        <dbReference type="ChEBI" id="CHEBI:456216"/>
        <dbReference type="EC" id="6.3.5.3"/>
    </reaction>
</comment>
<comment type="catalytic activity">
    <reaction evidence="1">
        <text>L-glutamine + H2O = L-glutamate + NH4(+)</text>
        <dbReference type="Rhea" id="RHEA:15889"/>
        <dbReference type="ChEBI" id="CHEBI:15377"/>
        <dbReference type="ChEBI" id="CHEBI:28938"/>
        <dbReference type="ChEBI" id="CHEBI:29985"/>
        <dbReference type="ChEBI" id="CHEBI:58359"/>
        <dbReference type="EC" id="3.5.1.2"/>
    </reaction>
</comment>
<comment type="pathway">
    <text evidence="1">Purine metabolism; IMP biosynthesis via de novo pathway; 5-amino-1-(5-phospho-D-ribosyl)imidazole from N(2)-formyl-N(1)-(5-phospho-D-ribosyl)glycinamide: step 1/2.</text>
</comment>
<comment type="subunit">
    <text evidence="1">Part of the FGAM synthase complex composed of 1 PurL, 1 PurQ and 2 PurS subunits.</text>
</comment>
<comment type="subcellular location">
    <subcellularLocation>
        <location evidence="1">Cytoplasm</location>
    </subcellularLocation>
</comment>
<accession>Q2S567</accession>
<gene>
    <name evidence="1" type="primary">purQ</name>
    <name type="ordered locus">SRU_0521</name>
</gene>
<evidence type="ECO:0000255" key="1">
    <source>
        <dbReference type="HAMAP-Rule" id="MF_00421"/>
    </source>
</evidence>
<organism>
    <name type="scientific">Salinibacter ruber (strain DSM 13855 / M31)</name>
    <dbReference type="NCBI Taxonomy" id="309807"/>
    <lineage>
        <taxon>Bacteria</taxon>
        <taxon>Pseudomonadati</taxon>
        <taxon>Rhodothermota</taxon>
        <taxon>Rhodothermia</taxon>
        <taxon>Rhodothermales</taxon>
        <taxon>Salinibacteraceae</taxon>
        <taxon>Salinibacter</taxon>
    </lineage>
</organism>